<sequence length="179" mass="19455">MSSRVLTPDVVGIDALVHDHQTVLAKAEGGVVAVFANNAPAFYAVTPARLAELLALEEKLARPGSDVALDDQLYQEPQAAPVAVPMGKFAMYPDWQPDADFIRLAALWGVALREPVTTEELASFIAYWQAEGKVFHHVQWQQKLARSLQIGRASNGGLPKRDVNTVSEPDSQIPPGFRG</sequence>
<feature type="chain" id="PRO_1000136429" description="Replication restart protein DnaT">
    <location>
        <begin position="1"/>
        <end position="179"/>
    </location>
</feature>
<feature type="region of interest" description="Disordered" evidence="2">
    <location>
        <begin position="156"/>
        <end position="179"/>
    </location>
</feature>
<name>DNAT_ECO45</name>
<gene>
    <name evidence="1" type="primary">dnaT</name>
    <name type="ordered locus">ECS88_4983</name>
</gene>
<keyword id="KW-0235">DNA replication</keyword>
<keyword id="KW-0238">DNA-binding</keyword>
<keyword id="KW-0639">Primosome</keyword>
<keyword id="KW-1185">Reference proteome</keyword>
<protein>
    <recommendedName>
        <fullName evidence="1">Replication restart protein DnaT</fullName>
    </recommendedName>
</protein>
<organism>
    <name type="scientific">Escherichia coli O45:K1 (strain S88 / ExPEC)</name>
    <dbReference type="NCBI Taxonomy" id="585035"/>
    <lineage>
        <taxon>Bacteria</taxon>
        <taxon>Pseudomonadati</taxon>
        <taxon>Pseudomonadota</taxon>
        <taxon>Gammaproteobacteria</taxon>
        <taxon>Enterobacterales</taxon>
        <taxon>Enterobacteriaceae</taxon>
        <taxon>Escherichia</taxon>
    </lineage>
</organism>
<comment type="function">
    <text evidence="1">Involved in the restart of stalled replication forks, which reloads the replicative helicase on sites other than the origin of replication. Can function in multiple replication restart pathways. Displaces ssDNA from a PriB-ssDNA complex. Probably forms a spiral filament on ssDNA.</text>
</comment>
<comment type="subunit">
    <text evidence="1">Homooligomerizes. Interacts with PriB. Component of the replication restart primosome. Primosome assembly occurs via a 'hand-off' mechanism. PriA binds to replication forks, subsequently PriB then DnaT bind; DnaT then displaces ssDNA to generate the helicase loading substrate.</text>
</comment>
<comment type="similarity">
    <text evidence="1">Belongs to the DnaT family.</text>
</comment>
<proteinExistence type="inferred from homology"/>
<evidence type="ECO:0000255" key="1">
    <source>
        <dbReference type="HAMAP-Rule" id="MF_01061"/>
    </source>
</evidence>
<evidence type="ECO:0000256" key="2">
    <source>
        <dbReference type="SAM" id="MobiDB-lite"/>
    </source>
</evidence>
<reference key="1">
    <citation type="journal article" date="2009" name="PLoS Genet.">
        <title>Organised genome dynamics in the Escherichia coli species results in highly diverse adaptive paths.</title>
        <authorList>
            <person name="Touchon M."/>
            <person name="Hoede C."/>
            <person name="Tenaillon O."/>
            <person name="Barbe V."/>
            <person name="Baeriswyl S."/>
            <person name="Bidet P."/>
            <person name="Bingen E."/>
            <person name="Bonacorsi S."/>
            <person name="Bouchier C."/>
            <person name="Bouvet O."/>
            <person name="Calteau A."/>
            <person name="Chiapello H."/>
            <person name="Clermont O."/>
            <person name="Cruveiller S."/>
            <person name="Danchin A."/>
            <person name="Diard M."/>
            <person name="Dossat C."/>
            <person name="Karoui M.E."/>
            <person name="Frapy E."/>
            <person name="Garry L."/>
            <person name="Ghigo J.M."/>
            <person name="Gilles A.M."/>
            <person name="Johnson J."/>
            <person name="Le Bouguenec C."/>
            <person name="Lescat M."/>
            <person name="Mangenot S."/>
            <person name="Martinez-Jehanne V."/>
            <person name="Matic I."/>
            <person name="Nassif X."/>
            <person name="Oztas S."/>
            <person name="Petit M.A."/>
            <person name="Pichon C."/>
            <person name="Rouy Z."/>
            <person name="Ruf C.S."/>
            <person name="Schneider D."/>
            <person name="Tourret J."/>
            <person name="Vacherie B."/>
            <person name="Vallenet D."/>
            <person name="Medigue C."/>
            <person name="Rocha E.P.C."/>
            <person name="Denamur E."/>
        </authorList>
    </citation>
    <scope>NUCLEOTIDE SEQUENCE [LARGE SCALE GENOMIC DNA]</scope>
    <source>
        <strain>S88 / ExPEC</strain>
    </source>
</reference>
<accession>B7MNB4</accession>
<dbReference type="EMBL" id="CU928161">
    <property type="protein sequence ID" value="CAR06127.1"/>
    <property type="molecule type" value="Genomic_DNA"/>
</dbReference>
<dbReference type="RefSeq" id="WP_000098818.1">
    <property type="nucleotide sequence ID" value="NC_011742.1"/>
</dbReference>
<dbReference type="SMR" id="B7MNB4"/>
<dbReference type="GeneID" id="93777486"/>
<dbReference type="KEGG" id="ecz:ECS88_4983"/>
<dbReference type="HOGENOM" id="CLU_1501592_0_0_6"/>
<dbReference type="Proteomes" id="UP000000747">
    <property type="component" value="Chromosome"/>
</dbReference>
<dbReference type="GO" id="GO:1990077">
    <property type="term" value="C:primosome complex"/>
    <property type="evidence" value="ECO:0007669"/>
    <property type="project" value="UniProtKB-KW"/>
</dbReference>
<dbReference type="GO" id="GO:0006269">
    <property type="term" value="P:DNA replication, synthesis of primer"/>
    <property type="evidence" value="ECO:0007669"/>
    <property type="project" value="UniProtKB-UniRule"/>
</dbReference>
<dbReference type="FunFam" id="1.10.8.1180:FF:000001">
    <property type="entry name" value="Primosomal protein 1"/>
    <property type="match status" value="1"/>
</dbReference>
<dbReference type="Gene3D" id="1.10.8.1180">
    <property type="match status" value="1"/>
</dbReference>
<dbReference type="HAMAP" id="MF_01061">
    <property type="entry name" value="DnaT"/>
    <property type="match status" value="1"/>
</dbReference>
<dbReference type="InterPro" id="IPR020917">
    <property type="entry name" value="DnaT"/>
</dbReference>
<dbReference type="InterPro" id="IPR040480">
    <property type="entry name" value="DnaT_DNA_bind"/>
</dbReference>
<dbReference type="NCBIfam" id="NF002770">
    <property type="entry name" value="PRK02854.1"/>
    <property type="match status" value="1"/>
</dbReference>
<dbReference type="Pfam" id="PF17948">
    <property type="entry name" value="DnaT"/>
    <property type="match status" value="1"/>
</dbReference>